<accession>A6V1U5</accession>
<dbReference type="EC" id="3.5.4.13" evidence="1"/>
<dbReference type="EMBL" id="CP000744">
    <property type="protein sequence ID" value="ABR86213.1"/>
    <property type="molecule type" value="Genomic_DNA"/>
</dbReference>
<dbReference type="RefSeq" id="WP_003092017.1">
    <property type="nucleotide sequence ID" value="NC_009656.1"/>
</dbReference>
<dbReference type="SMR" id="A6V1U5"/>
<dbReference type="GeneID" id="77220012"/>
<dbReference type="KEGG" id="pap:PSPA7_1646"/>
<dbReference type="HOGENOM" id="CLU_087476_4_0_6"/>
<dbReference type="UniPathway" id="UPA00610">
    <property type="reaction ID" value="UER00665"/>
</dbReference>
<dbReference type="Proteomes" id="UP000001582">
    <property type="component" value="Chromosome"/>
</dbReference>
<dbReference type="GO" id="GO:0008829">
    <property type="term" value="F:dCTP deaminase activity"/>
    <property type="evidence" value="ECO:0007669"/>
    <property type="project" value="UniProtKB-UniRule"/>
</dbReference>
<dbReference type="GO" id="GO:0000166">
    <property type="term" value="F:nucleotide binding"/>
    <property type="evidence" value="ECO:0007669"/>
    <property type="project" value="UniProtKB-KW"/>
</dbReference>
<dbReference type="GO" id="GO:0006226">
    <property type="term" value="P:dUMP biosynthetic process"/>
    <property type="evidence" value="ECO:0007669"/>
    <property type="project" value="UniProtKB-UniPathway"/>
</dbReference>
<dbReference type="GO" id="GO:0006229">
    <property type="term" value="P:dUTP biosynthetic process"/>
    <property type="evidence" value="ECO:0007669"/>
    <property type="project" value="UniProtKB-UniRule"/>
</dbReference>
<dbReference type="GO" id="GO:0015949">
    <property type="term" value="P:nucleobase-containing small molecule interconversion"/>
    <property type="evidence" value="ECO:0007669"/>
    <property type="project" value="TreeGrafter"/>
</dbReference>
<dbReference type="CDD" id="cd07557">
    <property type="entry name" value="trimeric_dUTPase"/>
    <property type="match status" value="1"/>
</dbReference>
<dbReference type="FunFam" id="2.70.40.10:FF:000001">
    <property type="entry name" value="dCTP deaminase"/>
    <property type="match status" value="1"/>
</dbReference>
<dbReference type="Gene3D" id="2.70.40.10">
    <property type="match status" value="1"/>
</dbReference>
<dbReference type="HAMAP" id="MF_00146">
    <property type="entry name" value="dCTP_deaminase"/>
    <property type="match status" value="1"/>
</dbReference>
<dbReference type="InterPro" id="IPR011962">
    <property type="entry name" value="dCTP_deaminase"/>
</dbReference>
<dbReference type="InterPro" id="IPR036157">
    <property type="entry name" value="dUTPase-like_sf"/>
</dbReference>
<dbReference type="InterPro" id="IPR033704">
    <property type="entry name" value="dUTPase_trimeric"/>
</dbReference>
<dbReference type="NCBIfam" id="TIGR02274">
    <property type="entry name" value="dCTP_deam"/>
    <property type="match status" value="1"/>
</dbReference>
<dbReference type="PANTHER" id="PTHR42680">
    <property type="entry name" value="DCTP DEAMINASE"/>
    <property type="match status" value="1"/>
</dbReference>
<dbReference type="PANTHER" id="PTHR42680:SF3">
    <property type="entry name" value="DCTP DEAMINASE"/>
    <property type="match status" value="1"/>
</dbReference>
<dbReference type="Pfam" id="PF22769">
    <property type="entry name" value="DCD"/>
    <property type="match status" value="1"/>
</dbReference>
<dbReference type="SUPFAM" id="SSF51283">
    <property type="entry name" value="dUTPase-like"/>
    <property type="match status" value="1"/>
</dbReference>
<organism>
    <name type="scientific">Pseudomonas paraeruginosa (strain DSM 24068 / PA7)</name>
    <name type="common">Pseudomonas aeruginosa (strain PA7)</name>
    <dbReference type="NCBI Taxonomy" id="381754"/>
    <lineage>
        <taxon>Bacteria</taxon>
        <taxon>Pseudomonadati</taxon>
        <taxon>Pseudomonadota</taxon>
        <taxon>Gammaproteobacteria</taxon>
        <taxon>Pseudomonadales</taxon>
        <taxon>Pseudomonadaceae</taxon>
        <taxon>Pseudomonas</taxon>
        <taxon>Pseudomonas paraeruginosa</taxon>
    </lineage>
</organism>
<name>DCD_PSEP7</name>
<keyword id="KW-0378">Hydrolase</keyword>
<keyword id="KW-0546">Nucleotide metabolism</keyword>
<keyword id="KW-0547">Nucleotide-binding</keyword>
<comment type="function">
    <text evidence="1">Catalyzes the deamination of dCTP to dUTP.</text>
</comment>
<comment type="catalytic activity">
    <reaction evidence="1">
        <text>dCTP + H2O + H(+) = dUTP + NH4(+)</text>
        <dbReference type="Rhea" id="RHEA:22680"/>
        <dbReference type="ChEBI" id="CHEBI:15377"/>
        <dbReference type="ChEBI" id="CHEBI:15378"/>
        <dbReference type="ChEBI" id="CHEBI:28938"/>
        <dbReference type="ChEBI" id="CHEBI:61481"/>
        <dbReference type="ChEBI" id="CHEBI:61555"/>
        <dbReference type="EC" id="3.5.4.13"/>
    </reaction>
</comment>
<comment type="pathway">
    <text evidence="1">Pyrimidine metabolism; dUMP biosynthesis; dUMP from dCTP (dUTP route): step 1/2.</text>
</comment>
<comment type="subunit">
    <text evidence="1">Homotrimer.</text>
</comment>
<comment type="similarity">
    <text evidence="1">Belongs to the dCTP deaminase family.</text>
</comment>
<feature type="chain" id="PRO_1000009783" description="dCTP deaminase">
    <location>
        <begin position="1"/>
        <end position="188"/>
    </location>
</feature>
<feature type="active site" description="Proton donor/acceptor" evidence="1">
    <location>
        <position position="137"/>
    </location>
</feature>
<feature type="binding site" evidence="1">
    <location>
        <begin position="111"/>
        <end position="116"/>
    </location>
    <ligand>
        <name>dCTP</name>
        <dbReference type="ChEBI" id="CHEBI:61481"/>
    </ligand>
</feature>
<feature type="binding site" evidence="1">
    <location>
        <begin position="135"/>
        <end position="137"/>
    </location>
    <ligand>
        <name>dCTP</name>
        <dbReference type="ChEBI" id="CHEBI:61481"/>
    </ligand>
</feature>
<feature type="binding site" evidence="1">
    <location>
        <position position="156"/>
    </location>
    <ligand>
        <name>dCTP</name>
        <dbReference type="ChEBI" id="CHEBI:61481"/>
    </ligand>
</feature>
<feature type="binding site" evidence="1">
    <location>
        <position position="170"/>
    </location>
    <ligand>
        <name>dCTP</name>
        <dbReference type="ChEBI" id="CHEBI:61481"/>
    </ligand>
</feature>
<feature type="binding site" evidence="1">
    <location>
        <position position="180"/>
    </location>
    <ligand>
        <name>dCTP</name>
        <dbReference type="ChEBI" id="CHEBI:61481"/>
    </ligand>
</feature>
<proteinExistence type="inferred from homology"/>
<protein>
    <recommendedName>
        <fullName evidence="1">dCTP deaminase</fullName>
        <ecNumber evidence="1">3.5.4.13</ecNumber>
    </recommendedName>
    <alternativeName>
        <fullName evidence="1">Deoxycytidine triphosphate deaminase</fullName>
    </alternativeName>
</protein>
<reference key="1">
    <citation type="submission" date="2007-06" db="EMBL/GenBank/DDBJ databases">
        <authorList>
            <person name="Dodson R.J."/>
            <person name="Harkins D."/>
            <person name="Paulsen I.T."/>
        </authorList>
    </citation>
    <scope>NUCLEOTIDE SEQUENCE [LARGE SCALE GENOMIC DNA]</scope>
    <source>
        <strain>DSM 24068 / PA7</strain>
    </source>
</reference>
<gene>
    <name evidence="1" type="primary">dcd</name>
    <name type="ordered locus">PSPA7_1646</name>
</gene>
<sequence length="188" mass="21154">MTIKSDKWIRRMAQEHGMIEPFVERQVRGADDSRVISYGVSSYGYDVRCAAEFKVFTNIHSAVVDPKNFDEKSFVDINSDVCIIPPNSFALARTVEYFRIPRDVLTICLGKSTYARCGIIVNVTPLEPEWEGHVTLEFSNTTNLPAKIYANEGVAQMLFLQSDEACEVSYKDRGGKYQGQRGVTLPKA</sequence>
<evidence type="ECO:0000255" key="1">
    <source>
        <dbReference type="HAMAP-Rule" id="MF_00146"/>
    </source>
</evidence>